<protein>
    <recommendedName>
        <fullName evidence="1">Peptide chain release factor 1</fullName>
        <shortName evidence="1">RF-1</shortName>
    </recommendedName>
</protein>
<feature type="chain" id="PRO_0000263373" description="Peptide chain release factor 1">
    <location>
        <begin position="1"/>
        <end position="364"/>
    </location>
</feature>
<feature type="region of interest" description="Disordered" evidence="2">
    <location>
        <begin position="289"/>
        <end position="315"/>
    </location>
</feature>
<feature type="compositionally biased region" description="Basic and acidic residues" evidence="2">
    <location>
        <begin position="306"/>
        <end position="315"/>
    </location>
</feature>
<feature type="modified residue" description="N5-methylglutamine" evidence="1">
    <location>
        <position position="239"/>
    </location>
</feature>
<comment type="function">
    <text evidence="1">Peptide chain release factor 1 directs the termination of translation in response to the peptide chain termination codons UAG and UAA.</text>
</comment>
<comment type="subcellular location">
    <subcellularLocation>
        <location evidence="1">Cytoplasm</location>
    </subcellularLocation>
</comment>
<comment type="PTM">
    <text evidence="1">Methylated by PrmC. Methylation increases the termination efficiency of RF1.</text>
</comment>
<comment type="similarity">
    <text evidence="1">Belongs to the prokaryotic/mitochondrial release factor family.</text>
</comment>
<accession>Q0ID34</accession>
<gene>
    <name evidence="1" type="primary">prfA</name>
    <name type="ordered locus">sync_0408</name>
</gene>
<name>RF1_SYNS3</name>
<reference key="1">
    <citation type="journal article" date="2006" name="Proc. Natl. Acad. Sci. U.S.A.">
        <title>Genome sequence of Synechococcus CC9311: insights into adaptation to a coastal environment.</title>
        <authorList>
            <person name="Palenik B."/>
            <person name="Ren Q."/>
            <person name="Dupont C.L."/>
            <person name="Myers G.S."/>
            <person name="Heidelberg J.F."/>
            <person name="Badger J.H."/>
            <person name="Madupu R."/>
            <person name="Nelson W.C."/>
            <person name="Brinkac L.M."/>
            <person name="Dodson R.J."/>
            <person name="Durkin A.S."/>
            <person name="Daugherty S.C."/>
            <person name="Sullivan S.A."/>
            <person name="Khouri H."/>
            <person name="Mohamoud Y."/>
            <person name="Halpin R."/>
            <person name="Paulsen I.T."/>
        </authorList>
    </citation>
    <scope>NUCLEOTIDE SEQUENCE [LARGE SCALE GENOMIC DNA]</scope>
    <source>
        <strain>CC9311</strain>
    </source>
</reference>
<proteinExistence type="inferred from homology"/>
<keyword id="KW-0963">Cytoplasm</keyword>
<keyword id="KW-0488">Methylation</keyword>
<keyword id="KW-0648">Protein biosynthesis</keyword>
<keyword id="KW-1185">Reference proteome</keyword>
<evidence type="ECO:0000255" key="1">
    <source>
        <dbReference type="HAMAP-Rule" id="MF_00093"/>
    </source>
</evidence>
<evidence type="ECO:0000256" key="2">
    <source>
        <dbReference type="SAM" id="MobiDB-lite"/>
    </source>
</evidence>
<dbReference type="EMBL" id="CP000435">
    <property type="protein sequence ID" value="ABI46749.1"/>
    <property type="molecule type" value="Genomic_DNA"/>
</dbReference>
<dbReference type="RefSeq" id="WP_011618376.1">
    <property type="nucleotide sequence ID" value="NC_008319.1"/>
</dbReference>
<dbReference type="SMR" id="Q0ID34"/>
<dbReference type="STRING" id="64471.sync_0408"/>
<dbReference type="KEGG" id="syg:sync_0408"/>
<dbReference type="eggNOG" id="COG0216">
    <property type="taxonomic scope" value="Bacteria"/>
</dbReference>
<dbReference type="HOGENOM" id="CLU_036856_0_1_3"/>
<dbReference type="OrthoDB" id="9806673at2"/>
<dbReference type="Proteomes" id="UP000001961">
    <property type="component" value="Chromosome"/>
</dbReference>
<dbReference type="GO" id="GO:0005737">
    <property type="term" value="C:cytoplasm"/>
    <property type="evidence" value="ECO:0007669"/>
    <property type="project" value="UniProtKB-SubCell"/>
</dbReference>
<dbReference type="GO" id="GO:0016149">
    <property type="term" value="F:translation release factor activity, codon specific"/>
    <property type="evidence" value="ECO:0007669"/>
    <property type="project" value="UniProtKB-UniRule"/>
</dbReference>
<dbReference type="FunFam" id="3.30.160.20:FF:000004">
    <property type="entry name" value="Peptide chain release factor 1"/>
    <property type="match status" value="1"/>
</dbReference>
<dbReference type="FunFam" id="3.30.70.1660:FF:000002">
    <property type="entry name" value="Peptide chain release factor 1"/>
    <property type="match status" value="1"/>
</dbReference>
<dbReference type="Gene3D" id="3.30.160.20">
    <property type="match status" value="1"/>
</dbReference>
<dbReference type="Gene3D" id="3.30.70.1660">
    <property type="match status" value="2"/>
</dbReference>
<dbReference type="Gene3D" id="6.10.140.1950">
    <property type="match status" value="1"/>
</dbReference>
<dbReference type="HAMAP" id="MF_00093">
    <property type="entry name" value="Rel_fac_1"/>
    <property type="match status" value="1"/>
</dbReference>
<dbReference type="InterPro" id="IPR005139">
    <property type="entry name" value="PCRF"/>
</dbReference>
<dbReference type="InterPro" id="IPR000352">
    <property type="entry name" value="Pep_chain_release_fac_I"/>
</dbReference>
<dbReference type="InterPro" id="IPR045853">
    <property type="entry name" value="Pep_chain_release_fac_I_sf"/>
</dbReference>
<dbReference type="InterPro" id="IPR050057">
    <property type="entry name" value="Prokaryotic/Mito_RF"/>
</dbReference>
<dbReference type="InterPro" id="IPR004373">
    <property type="entry name" value="RF-1"/>
</dbReference>
<dbReference type="NCBIfam" id="TIGR00019">
    <property type="entry name" value="prfA"/>
    <property type="match status" value="1"/>
</dbReference>
<dbReference type="NCBIfam" id="NF001859">
    <property type="entry name" value="PRK00591.1"/>
    <property type="match status" value="1"/>
</dbReference>
<dbReference type="PANTHER" id="PTHR43804">
    <property type="entry name" value="LD18447P"/>
    <property type="match status" value="1"/>
</dbReference>
<dbReference type="PANTHER" id="PTHR43804:SF8">
    <property type="entry name" value="PEPTIDE CHAIN RELEASE FACTOR APG3, CHLOROPLASTIC"/>
    <property type="match status" value="1"/>
</dbReference>
<dbReference type="Pfam" id="PF03462">
    <property type="entry name" value="PCRF"/>
    <property type="match status" value="1"/>
</dbReference>
<dbReference type="Pfam" id="PF00472">
    <property type="entry name" value="RF-1"/>
    <property type="match status" value="1"/>
</dbReference>
<dbReference type="SMART" id="SM00937">
    <property type="entry name" value="PCRF"/>
    <property type="match status" value="1"/>
</dbReference>
<dbReference type="SUPFAM" id="SSF75620">
    <property type="entry name" value="Release factor"/>
    <property type="match status" value="1"/>
</dbReference>
<dbReference type="PROSITE" id="PS00745">
    <property type="entry name" value="RF_PROK_I"/>
    <property type="match status" value="1"/>
</dbReference>
<sequence>MDTTTLISRLEAASSSFHNLERQLADPDVAADPQRLETIARERSRLEPLVLDYTSLQKVEAEQVQAKSLLKESRGDAAMEELAQQELQELDRHHADLIQRITLALLPKDPRDERSVMLEIRAGAGGDEACLWAGDLARMYERFSSRRGWSVTPVSANEADLGGYKELILSVKGDAVFSELKFEAGVHRVQRVPSTESQGRVHTSTATVAVMPEADPVEVQIDPRDLDISTARSGGAGGQNVNKVETAVDLMHKPTGIRVFCTQERSQMQNRERALEILRAKLYERQLAEANASERSARRSQVGTGDRSEKIRTYNAKDNRMTDHRLGRNFSLDPVLEGQMDDVIDACIAEEQRGKLADLSEQAD</sequence>
<organism>
    <name type="scientific">Synechococcus sp. (strain CC9311)</name>
    <dbReference type="NCBI Taxonomy" id="64471"/>
    <lineage>
        <taxon>Bacteria</taxon>
        <taxon>Bacillati</taxon>
        <taxon>Cyanobacteriota</taxon>
        <taxon>Cyanophyceae</taxon>
        <taxon>Synechococcales</taxon>
        <taxon>Synechococcaceae</taxon>
        <taxon>Synechococcus</taxon>
    </lineage>
</organism>